<comment type="function">
    <text evidence="1">Involved in rRNA-processing at A0, A1 and A2 sites and negatively regulates telomerase.</text>
</comment>
<comment type="subcellular location">
    <subcellularLocation>
        <location evidence="1">Nucleus</location>
        <location evidence="1">Nucleolus</location>
    </subcellularLocation>
</comment>
<comment type="similarity">
    <text evidence="4">Belongs to the PINX1 family.</text>
</comment>
<keyword id="KW-0539">Nucleus</keyword>
<keyword id="KW-1185">Reference proteome</keyword>
<keyword id="KW-0690">Ribosome biogenesis</keyword>
<keyword id="KW-0698">rRNA processing</keyword>
<name>PXR1_ASPFU</name>
<gene>
    <name type="primary">pxr1</name>
    <name type="ORF">AFUA_7G03690</name>
</gene>
<reference key="1">
    <citation type="journal article" date="2005" name="Nature">
        <title>Genomic sequence of the pathogenic and allergenic filamentous fungus Aspergillus fumigatus.</title>
        <authorList>
            <person name="Nierman W.C."/>
            <person name="Pain A."/>
            <person name="Anderson M.J."/>
            <person name="Wortman J.R."/>
            <person name="Kim H.S."/>
            <person name="Arroyo J."/>
            <person name="Berriman M."/>
            <person name="Abe K."/>
            <person name="Archer D.B."/>
            <person name="Bermejo C."/>
            <person name="Bennett J.W."/>
            <person name="Bowyer P."/>
            <person name="Chen D."/>
            <person name="Collins M."/>
            <person name="Coulsen R."/>
            <person name="Davies R."/>
            <person name="Dyer P.S."/>
            <person name="Farman M.L."/>
            <person name="Fedorova N."/>
            <person name="Fedorova N.D."/>
            <person name="Feldblyum T.V."/>
            <person name="Fischer R."/>
            <person name="Fosker N."/>
            <person name="Fraser A."/>
            <person name="Garcia J.L."/>
            <person name="Garcia M.J."/>
            <person name="Goble A."/>
            <person name="Goldman G.H."/>
            <person name="Gomi K."/>
            <person name="Griffith-Jones S."/>
            <person name="Gwilliam R."/>
            <person name="Haas B.J."/>
            <person name="Haas H."/>
            <person name="Harris D.E."/>
            <person name="Horiuchi H."/>
            <person name="Huang J."/>
            <person name="Humphray S."/>
            <person name="Jimenez J."/>
            <person name="Keller N."/>
            <person name="Khouri H."/>
            <person name="Kitamoto K."/>
            <person name="Kobayashi T."/>
            <person name="Konzack S."/>
            <person name="Kulkarni R."/>
            <person name="Kumagai T."/>
            <person name="Lafton A."/>
            <person name="Latge J.-P."/>
            <person name="Li W."/>
            <person name="Lord A."/>
            <person name="Lu C."/>
            <person name="Majoros W.H."/>
            <person name="May G.S."/>
            <person name="Miller B.L."/>
            <person name="Mohamoud Y."/>
            <person name="Molina M."/>
            <person name="Monod M."/>
            <person name="Mouyna I."/>
            <person name="Mulligan S."/>
            <person name="Murphy L.D."/>
            <person name="O'Neil S."/>
            <person name="Paulsen I."/>
            <person name="Penalva M.A."/>
            <person name="Pertea M."/>
            <person name="Price C."/>
            <person name="Pritchard B.L."/>
            <person name="Quail M.A."/>
            <person name="Rabbinowitsch E."/>
            <person name="Rawlins N."/>
            <person name="Rajandream M.A."/>
            <person name="Reichard U."/>
            <person name="Renauld H."/>
            <person name="Robson G.D."/>
            <person name="Rodriguez de Cordoba S."/>
            <person name="Rodriguez-Pena J.M."/>
            <person name="Ronning C.M."/>
            <person name="Rutter S."/>
            <person name="Salzberg S.L."/>
            <person name="Sanchez M."/>
            <person name="Sanchez-Ferrero J.C."/>
            <person name="Saunders D."/>
            <person name="Seeger K."/>
            <person name="Squares R."/>
            <person name="Squares S."/>
            <person name="Takeuchi M."/>
            <person name="Tekaia F."/>
            <person name="Turner G."/>
            <person name="Vazquez de Aldana C.R."/>
            <person name="Weidman J."/>
            <person name="White O."/>
            <person name="Woodward J.R."/>
            <person name="Yu J.-H."/>
            <person name="Fraser C.M."/>
            <person name="Galagan J.E."/>
            <person name="Asai K."/>
            <person name="Machida M."/>
            <person name="Hall N."/>
            <person name="Barrell B.G."/>
            <person name="Denning D.W."/>
        </authorList>
    </citation>
    <scope>NUCLEOTIDE SEQUENCE [LARGE SCALE GENOMIC DNA]</scope>
    <source>
        <strain>ATCC MYA-4609 / CBS 101355 / FGSC A1100 / Af293</strain>
    </source>
</reference>
<organism>
    <name type="scientific">Aspergillus fumigatus (strain ATCC MYA-4609 / CBS 101355 / FGSC A1100 / Af293)</name>
    <name type="common">Neosartorya fumigata</name>
    <dbReference type="NCBI Taxonomy" id="330879"/>
    <lineage>
        <taxon>Eukaryota</taxon>
        <taxon>Fungi</taxon>
        <taxon>Dikarya</taxon>
        <taxon>Ascomycota</taxon>
        <taxon>Pezizomycotina</taxon>
        <taxon>Eurotiomycetes</taxon>
        <taxon>Eurotiomycetidae</taxon>
        <taxon>Eurotiales</taxon>
        <taxon>Aspergillaceae</taxon>
        <taxon>Aspergillus</taxon>
        <taxon>Aspergillus subgen. Fumigati</taxon>
    </lineage>
</organism>
<feature type="chain" id="PRO_0000324879" description="Protein pxr1">
    <location>
        <begin position="1"/>
        <end position="304"/>
    </location>
</feature>
<feature type="domain" description="G-patch" evidence="2">
    <location>
        <begin position="25"/>
        <end position="79"/>
    </location>
</feature>
<feature type="region of interest" description="Disordered" evidence="3">
    <location>
        <begin position="1"/>
        <end position="25"/>
    </location>
</feature>
<feature type="region of interest" description="Disordered" evidence="3">
    <location>
        <begin position="144"/>
        <end position="238"/>
    </location>
</feature>
<feature type="region of interest" description="Disordered" evidence="3">
    <location>
        <begin position="256"/>
        <end position="276"/>
    </location>
</feature>
<feature type="compositionally biased region" description="Basic residues" evidence="3">
    <location>
        <begin position="1"/>
        <end position="11"/>
    </location>
</feature>
<feature type="compositionally biased region" description="Polar residues" evidence="3">
    <location>
        <begin position="15"/>
        <end position="25"/>
    </location>
</feature>
<feature type="compositionally biased region" description="Basic and acidic residues" evidence="3">
    <location>
        <begin position="154"/>
        <end position="170"/>
    </location>
</feature>
<feature type="compositionally biased region" description="Basic and acidic residues" evidence="3">
    <location>
        <begin position="204"/>
        <end position="238"/>
    </location>
</feature>
<feature type="compositionally biased region" description="Polar residues" evidence="3">
    <location>
        <begin position="256"/>
        <end position="266"/>
    </location>
</feature>
<accession>Q4WG40</accession>
<proteinExistence type="inferred from homology"/>
<protein>
    <recommendedName>
        <fullName>Protein pxr1</fullName>
    </recommendedName>
    <alternativeName>
        <fullName>PinX1-related protein 1</fullName>
    </alternativeName>
</protein>
<sequence>MGLAAPRKKTKISHDPNNTSWSRSTDGFGHRILKAQGWTPGDFLGARNATHSDLFTTASASHIRVVLKDDTLGLGARPKRDLLDGPTGLDAFKGLLGRLNGKSDTQLEAEQQKRDDAKLARYAATKWQTVRFISGGLLVQEKDNATASPASQDLRVDFPRETSSNEHENGMFKTEPMDSYSHQEGCATAREEEGKKKKKKNKKGKEMDMSPRKSREKKQEKIQKKRKIGDCDRLDTETADRTSTKVLVAVANDKGTSLLASNGPSTSRERQPMGRRIFRSRHIEQKKRALMDDKSLNEIFMIKT</sequence>
<dbReference type="EMBL" id="AAHF01000009">
    <property type="protein sequence ID" value="EAL87101.1"/>
    <property type="molecule type" value="Genomic_DNA"/>
</dbReference>
<dbReference type="RefSeq" id="XP_749139.1">
    <property type="nucleotide sequence ID" value="XM_744046.1"/>
</dbReference>
<dbReference type="SMR" id="Q4WG40"/>
<dbReference type="STRING" id="330879.Q4WG40"/>
<dbReference type="EnsemblFungi" id="EAL87101">
    <property type="protein sequence ID" value="EAL87101"/>
    <property type="gene ID" value="AFUA_7G03690"/>
</dbReference>
<dbReference type="GeneID" id="3506375"/>
<dbReference type="KEGG" id="afm:AFUA_7G03690"/>
<dbReference type="VEuPathDB" id="FungiDB:Afu7g03690"/>
<dbReference type="eggNOG" id="KOG2809">
    <property type="taxonomic scope" value="Eukaryota"/>
</dbReference>
<dbReference type="HOGENOM" id="CLU_052839_0_0_1"/>
<dbReference type="InParanoid" id="Q4WG40"/>
<dbReference type="OMA" id="ATKWHTV"/>
<dbReference type="OrthoDB" id="264532at2759"/>
<dbReference type="Proteomes" id="UP000002530">
    <property type="component" value="Chromosome 7"/>
</dbReference>
<dbReference type="GO" id="GO:0005730">
    <property type="term" value="C:nucleolus"/>
    <property type="evidence" value="ECO:0007669"/>
    <property type="project" value="UniProtKB-SubCell"/>
</dbReference>
<dbReference type="GO" id="GO:0003676">
    <property type="term" value="F:nucleic acid binding"/>
    <property type="evidence" value="ECO:0007669"/>
    <property type="project" value="InterPro"/>
</dbReference>
<dbReference type="GO" id="GO:0006364">
    <property type="term" value="P:rRNA processing"/>
    <property type="evidence" value="ECO:0007669"/>
    <property type="project" value="UniProtKB-KW"/>
</dbReference>
<dbReference type="InterPro" id="IPR000467">
    <property type="entry name" value="G_patch_dom"/>
</dbReference>
<dbReference type="InterPro" id="IPR050656">
    <property type="entry name" value="PINX1"/>
</dbReference>
<dbReference type="PANTHER" id="PTHR23149">
    <property type="entry name" value="G PATCH DOMAIN CONTAINING PROTEIN"/>
    <property type="match status" value="1"/>
</dbReference>
<dbReference type="PANTHER" id="PTHR23149:SF31">
    <property type="entry name" value="PROTEIN PXR1"/>
    <property type="match status" value="1"/>
</dbReference>
<dbReference type="PROSITE" id="PS50174">
    <property type="entry name" value="G_PATCH"/>
    <property type="match status" value="1"/>
</dbReference>
<evidence type="ECO:0000250" key="1"/>
<evidence type="ECO:0000255" key="2">
    <source>
        <dbReference type="PROSITE-ProRule" id="PRU00092"/>
    </source>
</evidence>
<evidence type="ECO:0000256" key="3">
    <source>
        <dbReference type="SAM" id="MobiDB-lite"/>
    </source>
</evidence>
<evidence type="ECO:0000305" key="4"/>